<comment type="function">
    <text evidence="1">This protein is one of the two subunits of integration host factor, a specific DNA-binding protein that functions in genetic recombination as well as in transcriptional and translational control.</text>
</comment>
<comment type="subunit">
    <text evidence="1">Heterodimer of an alpha and a beta chain.</text>
</comment>
<comment type="similarity">
    <text evidence="1">Belongs to the bacterial histone-like protein family.</text>
</comment>
<evidence type="ECO:0000255" key="1">
    <source>
        <dbReference type="HAMAP-Rule" id="MF_00381"/>
    </source>
</evidence>
<gene>
    <name evidence="1" type="primary">ihfB</name>
    <name evidence="1" type="synonym">himD</name>
    <name type="ordered locus">YPTS_1519</name>
</gene>
<organism>
    <name type="scientific">Yersinia pseudotuberculosis serotype IB (strain PB1/+)</name>
    <dbReference type="NCBI Taxonomy" id="502801"/>
    <lineage>
        <taxon>Bacteria</taxon>
        <taxon>Pseudomonadati</taxon>
        <taxon>Pseudomonadota</taxon>
        <taxon>Gammaproteobacteria</taxon>
        <taxon>Enterobacterales</taxon>
        <taxon>Yersiniaceae</taxon>
        <taxon>Yersinia</taxon>
    </lineage>
</organism>
<feature type="chain" id="PRO_1000122252" description="Integration host factor subunit beta">
    <location>
        <begin position="1"/>
        <end position="94"/>
    </location>
</feature>
<reference key="1">
    <citation type="submission" date="2008-04" db="EMBL/GenBank/DDBJ databases">
        <title>Complete sequence of Yersinia pseudotuberculosis PB1/+.</title>
        <authorList>
            <person name="Copeland A."/>
            <person name="Lucas S."/>
            <person name="Lapidus A."/>
            <person name="Glavina del Rio T."/>
            <person name="Dalin E."/>
            <person name="Tice H."/>
            <person name="Bruce D."/>
            <person name="Goodwin L."/>
            <person name="Pitluck S."/>
            <person name="Munk A.C."/>
            <person name="Brettin T."/>
            <person name="Detter J.C."/>
            <person name="Han C."/>
            <person name="Tapia R."/>
            <person name="Schmutz J."/>
            <person name="Larimer F."/>
            <person name="Land M."/>
            <person name="Hauser L."/>
            <person name="Challacombe J.F."/>
            <person name="Green L."/>
            <person name="Lindler L.E."/>
            <person name="Nikolich M.P."/>
            <person name="Richardson P."/>
        </authorList>
    </citation>
    <scope>NUCLEOTIDE SEQUENCE [LARGE SCALE GENOMIC DNA]</scope>
    <source>
        <strain>PB1/+</strain>
    </source>
</reference>
<proteinExistence type="inferred from homology"/>
<sequence>MTKSELIERLAGQQSHVPAKVVEDAVKEMLEHMAGTLAEGERIEIRGFGSFSLHYRAPRVGRNPKTGDKVELEGKYVPHFKPGKELRDRANIYG</sequence>
<name>IHFB_YERPB</name>
<accession>B2KA26</accession>
<dbReference type="EMBL" id="CP001048">
    <property type="protein sequence ID" value="ACC88491.1"/>
    <property type="molecule type" value="Genomic_DNA"/>
</dbReference>
<dbReference type="RefSeq" id="WP_002211322.1">
    <property type="nucleotide sequence ID" value="NZ_CP009780.1"/>
</dbReference>
<dbReference type="SMR" id="B2KA26"/>
<dbReference type="GeneID" id="96664989"/>
<dbReference type="KEGG" id="ypb:YPTS_1519"/>
<dbReference type="PATRIC" id="fig|502801.10.peg.884"/>
<dbReference type="GO" id="GO:0005694">
    <property type="term" value="C:chromosome"/>
    <property type="evidence" value="ECO:0007669"/>
    <property type="project" value="InterPro"/>
</dbReference>
<dbReference type="GO" id="GO:0005829">
    <property type="term" value="C:cytosol"/>
    <property type="evidence" value="ECO:0007669"/>
    <property type="project" value="TreeGrafter"/>
</dbReference>
<dbReference type="GO" id="GO:0003677">
    <property type="term" value="F:DNA binding"/>
    <property type="evidence" value="ECO:0007669"/>
    <property type="project" value="UniProtKB-UniRule"/>
</dbReference>
<dbReference type="GO" id="GO:0030527">
    <property type="term" value="F:structural constituent of chromatin"/>
    <property type="evidence" value="ECO:0007669"/>
    <property type="project" value="InterPro"/>
</dbReference>
<dbReference type="GO" id="GO:0006310">
    <property type="term" value="P:DNA recombination"/>
    <property type="evidence" value="ECO:0007669"/>
    <property type="project" value="UniProtKB-UniRule"/>
</dbReference>
<dbReference type="GO" id="GO:0006355">
    <property type="term" value="P:regulation of DNA-templated transcription"/>
    <property type="evidence" value="ECO:0007669"/>
    <property type="project" value="UniProtKB-UniRule"/>
</dbReference>
<dbReference type="GO" id="GO:0006417">
    <property type="term" value="P:regulation of translation"/>
    <property type="evidence" value="ECO:0007669"/>
    <property type="project" value="UniProtKB-UniRule"/>
</dbReference>
<dbReference type="CDD" id="cd13836">
    <property type="entry name" value="IHF_B"/>
    <property type="match status" value="1"/>
</dbReference>
<dbReference type="FunFam" id="4.10.520.10:FF:000003">
    <property type="entry name" value="Integration host factor subunit beta"/>
    <property type="match status" value="1"/>
</dbReference>
<dbReference type="Gene3D" id="4.10.520.10">
    <property type="entry name" value="IHF-like DNA-binding proteins"/>
    <property type="match status" value="1"/>
</dbReference>
<dbReference type="HAMAP" id="MF_00381">
    <property type="entry name" value="IHF_beta"/>
    <property type="match status" value="1"/>
</dbReference>
<dbReference type="InterPro" id="IPR000119">
    <property type="entry name" value="Hist_DNA-bd"/>
</dbReference>
<dbReference type="InterPro" id="IPR020816">
    <property type="entry name" value="Histone-like_DNA-bd_CS"/>
</dbReference>
<dbReference type="InterPro" id="IPR010992">
    <property type="entry name" value="IHF-like_DNA-bd_dom_sf"/>
</dbReference>
<dbReference type="InterPro" id="IPR005685">
    <property type="entry name" value="IHF_beta"/>
</dbReference>
<dbReference type="NCBIfam" id="TIGR00988">
    <property type="entry name" value="hip"/>
    <property type="match status" value="1"/>
</dbReference>
<dbReference type="NCBIfam" id="NF001222">
    <property type="entry name" value="PRK00199.1"/>
    <property type="match status" value="1"/>
</dbReference>
<dbReference type="PANTHER" id="PTHR33175">
    <property type="entry name" value="DNA-BINDING PROTEIN HU"/>
    <property type="match status" value="1"/>
</dbReference>
<dbReference type="PANTHER" id="PTHR33175:SF5">
    <property type="entry name" value="INTEGRATION HOST FACTOR SUBUNIT BETA"/>
    <property type="match status" value="1"/>
</dbReference>
<dbReference type="Pfam" id="PF00216">
    <property type="entry name" value="Bac_DNA_binding"/>
    <property type="match status" value="1"/>
</dbReference>
<dbReference type="PRINTS" id="PR01727">
    <property type="entry name" value="DNABINDINGHU"/>
</dbReference>
<dbReference type="SMART" id="SM00411">
    <property type="entry name" value="BHL"/>
    <property type="match status" value="1"/>
</dbReference>
<dbReference type="SUPFAM" id="SSF47729">
    <property type="entry name" value="IHF-like DNA-binding proteins"/>
    <property type="match status" value="1"/>
</dbReference>
<dbReference type="PROSITE" id="PS00045">
    <property type="entry name" value="HISTONE_LIKE"/>
    <property type="match status" value="1"/>
</dbReference>
<protein>
    <recommendedName>
        <fullName evidence="1">Integration host factor subunit beta</fullName>
        <shortName evidence="1">IHF-beta</shortName>
    </recommendedName>
</protein>
<keyword id="KW-0233">DNA recombination</keyword>
<keyword id="KW-0238">DNA-binding</keyword>
<keyword id="KW-0804">Transcription</keyword>
<keyword id="KW-0805">Transcription regulation</keyword>
<keyword id="KW-0810">Translation regulation</keyword>